<comment type="function">
    <text evidence="1">Catalyzes the anti-1,4-elimination of the C-3 phosphate and the C-6 proR hydrogen from 5-enolpyruvylshikimate-3-phosphate (EPSP) to yield chorismate, which is the branch point compound that serves as the starting substrate for the three terminal pathways of aromatic amino acid biosynthesis. This reaction introduces a second double bond into the aromatic ring system.</text>
</comment>
<comment type="catalytic activity">
    <reaction evidence="1">
        <text>5-O-(1-carboxyvinyl)-3-phosphoshikimate = chorismate + phosphate</text>
        <dbReference type="Rhea" id="RHEA:21020"/>
        <dbReference type="ChEBI" id="CHEBI:29748"/>
        <dbReference type="ChEBI" id="CHEBI:43474"/>
        <dbReference type="ChEBI" id="CHEBI:57701"/>
        <dbReference type="EC" id="4.2.3.5"/>
    </reaction>
</comment>
<comment type="cofactor">
    <cofactor evidence="1">
        <name>FMNH2</name>
        <dbReference type="ChEBI" id="CHEBI:57618"/>
    </cofactor>
    <text evidence="1">Reduced FMN (FMNH(2)).</text>
</comment>
<comment type="pathway">
    <text evidence="1">Metabolic intermediate biosynthesis; chorismate biosynthesis; chorismate from D-erythrose 4-phosphate and phosphoenolpyruvate: step 7/7.</text>
</comment>
<comment type="subunit">
    <text evidence="1">Homotetramer.</text>
</comment>
<comment type="similarity">
    <text evidence="1">Belongs to the chorismate synthase family.</text>
</comment>
<keyword id="KW-0028">Amino-acid biosynthesis</keyword>
<keyword id="KW-0057">Aromatic amino acid biosynthesis</keyword>
<keyword id="KW-0274">FAD</keyword>
<keyword id="KW-0285">Flavoprotein</keyword>
<keyword id="KW-0288">FMN</keyword>
<keyword id="KW-0456">Lyase</keyword>
<keyword id="KW-0521">NADP</keyword>
<evidence type="ECO:0000255" key="1">
    <source>
        <dbReference type="HAMAP-Rule" id="MF_00300"/>
    </source>
</evidence>
<evidence type="ECO:0000256" key="2">
    <source>
        <dbReference type="SAM" id="MobiDB-lite"/>
    </source>
</evidence>
<name>AROC1_BACC1</name>
<proteinExistence type="inferred from homology"/>
<dbReference type="EC" id="4.2.3.5" evidence="1"/>
<dbReference type="EMBL" id="AE017194">
    <property type="protein sequence ID" value="AAS40572.1"/>
    <property type="molecule type" value="Genomic_DNA"/>
</dbReference>
<dbReference type="SMR" id="Q73AX9"/>
<dbReference type="KEGG" id="bca:BCE_1643"/>
<dbReference type="HOGENOM" id="CLU_034547_2_0_9"/>
<dbReference type="UniPathway" id="UPA00053">
    <property type="reaction ID" value="UER00090"/>
</dbReference>
<dbReference type="Proteomes" id="UP000002527">
    <property type="component" value="Chromosome"/>
</dbReference>
<dbReference type="GO" id="GO:0005829">
    <property type="term" value="C:cytosol"/>
    <property type="evidence" value="ECO:0007669"/>
    <property type="project" value="TreeGrafter"/>
</dbReference>
<dbReference type="GO" id="GO:0004107">
    <property type="term" value="F:chorismate synthase activity"/>
    <property type="evidence" value="ECO:0007669"/>
    <property type="project" value="UniProtKB-UniRule"/>
</dbReference>
<dbReference type="GO" id="GO:0010181">
    <property type="term" value="F:FMN binding"/>
    <property type="evidence" value="ECO:0007669"/>
    <property type="project" value="TreeGrafter"/>
</dbReference>
<dbReference type="GO" id="GO:0008652">
    <property type="term" value="P:amino acid biosynthetic process"/>
    <property type="evidence" value="ECO:0007669"/>
    <property type="project" value="UniProtKB-KW"/>
</dbReference>
<dbReference type="GO" id="GO:0009073">
    <property type="term" value="P:aromatic amino acid family biosynthetic process"/>
    <property type="evidence" value="ECO:0007669"/>
    <property type="project" value="UniProtKB-KW"/>
</dbReference>
<dbReference type="GO" id="GO:0009423">
    <property type="term" value="P:chorismate biosynthetic process"/>
    <property type="evidence" value="ECO:0007669"/>
    <property type="project" value="UniProtKB-UniRule"/>
</dbReference>
<dbReference type="CDD" id="cd07304">
    <property type="entry name" value="Chorismate_synthase"/>
    <property type="match status" value="1"/>
</dbReference>
<dbReference type="FunFam" id="3.60.150.10:FF:000002">
    <property type="entry name" value="Chorismate synthase"/>
    <property type="match status" value="1"/>
</dbReference>
<dbReference type="Gene3D" id="3.60.150.10">
    <property type="entry name" value="Chorismate synthase AroC"/>
    <property type="match status" value="1"/>
</dbReference>
<dbReference type="HAMAP" id="MF_00300">
    <property type="entry name" value="Chorismate_synth"/>
    <property type="match status" value="1"/>
</dbReference>
<dbReference type="InterPro" id="IPR000453">
    <property type="entry name" value="Chorismate_synth"/>
</dbReference>
<dbReference type="InterPro" id="IPR035904">
    <property type="entry name" value="Chorismate_synth_AroC_sf"/>
</dbReference>
<dbReference type="InterPro" id="IPR020541">
    <property type="entry name" value="Chorismate_synthase_CS"/>
</dbReference>
<dbReference type="NCBIfam" id="TIGR00033">
    <property type="entry name" value="aroC"/>
    <property type="match status" value="1"/>
</dbReference>
<dbReference type="NCBIfam" id="NF003793">
    <property type="entry name" value="PRK05382.1"/>
    <property type="match status" value="1"/>
</dbReference>
<dbReference type="PANTHER" id="PTHR21085">
    <property type="entry name" value="CHORISMATE SYNTHASE"/>
    <property type="match status" value="1"/>
</dbReference>
<dbReference type="PANTHER" id="PTHR21085:SF0">
    <property type="entry name" value="CHORISMATE SYNTHASE"/>
    <property type="match status" value="1"/>
</dbReference>
<dbReference type="Pfam" id="PF01264">
    <property type="entry name" value="Chorismate_synt"/>
    <property type="match status" value="1"/>
</dbReference>
<dbReference type="PIRSF" id="PIRSF001456">
    <property type="entry name" value="Chorismate_synth"/>
    <property type="match status" value="1"/>
</dbReference>
<dbReference type="SUPFAM" id="SSF103263">
    <property type="entry name" value="Chorismate synthase, AroC"/>
    <property type="match status" value="1"/>
</dbReference>
<dbReference type="PROSITE" id="PS00787">
    <property type="entry name" value="CHORISMATE_SYNTHASE_1"/>
    <property type="match status" value="1"/>
</dbReference>
<dbReference type="PROSITE" id="PS00788">
    <property type="entry name" value="CHORISMATE_SYNTHASE_2"/>
    <property type="match status" value="1"/>
</dbReference>
<dbReference type="PROSITE" id="PS00789">
    <property type="entry name" value="CHORISMATE_SYNTHASE_3"/>
    <property type="match status" value="1"/>
</dbReference>
<reference key="1">
    <citation type="journal article" date="2004" name="Nucleic Acids Res.">
        <title>The genome sequence of Bacillus cereus ATCC 10987 reveals metabolic adaptations and a large plasmid related to Bacillus anthracis pXO1.</title>
        <authorList>
            <person name="Rasko D.A."/>
            <person name="Ravel J."/>
            <person name="Oekstad O.A."/>
            <person name="Helgason E."/>
            <person name="Cer R.Z."/>
            <person name="Jiang L."/>
            <person name="Shores K.A."/>
            <person name="Fouts D.E."/>
            <person name="Tourasse N.J."/>
            <person name="Angiuoli S.V."/>
            <person name="Kolonay J.F."/>
            <person name="Nelson W.C."/>
            <person name="Kolstoe A.-B."/>
            <person name="Fraser C.M."/>
            <person name="Read T.D."/>
        </authorList>
    </citation>
    <scope>NUCLEOTIDE SEQUENCE [LARGE SCALE GENOMIC DNA]</scope>
    <source>
        <strain>ATCC 10987 / NRS 248</strain>
    </source>
</reference>
<sequence>MRYITAGESHGPQLTTIIEGVPAGLPLVADDINEELARRQKGYGRGRRMQIETDQVQIVSGVRHGETLGSPIALVVENRDFAHWTKIMGAEPLTEQEEKEMKRKVTKPRPGHADLNGAIKYGHRDMRNVLERSSARETTVRVAAGAVAKKVLAELGIAVAGHVIEIGGVQAKETTYRSIEELKSITEASPVRCLDEEAGNQMIKAIDDAKSNGDSIGGIVEVIVEGMPIGVGSYVHYDRKLDAKLAAAMMSINAFKGVEIGIGFEAAHRPGSEVHDEIVWNEEHGYTRRTNNAGGLEGGMTTGMPIVVRGVMKPIPTLYKPLQSVDIDTKEPFTASIERSDSCAVPAASVVAEAVVAWELATAVIEQFGLDRMDLIRENIERHNEYARGF</sequence>
<protein>
    <recommendedName>
        <fullName evidence="1">Chorismate synthase 1</fullName>
        <shortName evidence="1">CS 1</shortName>
        <ecNumber evidence="1">4.2.3.5</ecNumber>
    </recommendedName>
    <alternativeName>
        <fullName evidence="1">5-enolpyruvylshikimate-3-phosphate phospholyase 1</fullName>
    </alternativeName>
</protein>
<gene>
    <name evidence="1" type="primary">aroC1</name>
    <name type="ordered locus">BCE_1643</name>
</gene>
<accession>Q73AX9</accession>
<feature type="chain" id="PRO_0000140541" description="Chorismate synthase 1">
    <location>
        <begin position="1"/>
        <end position="390"/>
    </location>
</feature>
<feature type="region of interest" description="Disordered" evidence="2">
    <location>
        <begin position="95"/>
        <end position="117"/>
    </location>
</feature>
<feature type="binding site" evidence="1">
    <location>
        <position position="39"/>
    </location>
    <ligand>
        <name>NADP(+)</name>
        <dbReference type="ChEBI" id="CHEBI:58349"/>
    </ligand>
</feature>
<feature type="binding site" evidence="1">
    <location>
        <position position="45"/>
    </location>
    <ligand>
        <name>NADP(+)</name>
        <dbReference type="ChEBI" id="CHEBI:58349"/>
    </ligand>
</feature>
<feature type="binding site" evidence="1">
    <location>
        <begin position="132"/>
        <end position="134"/>
    </location>
    <ligand>
        <name>FMN</name>
        <dbReference type="ChEBI" id="CHEBI:58210"/>
    </ligand>
</feature>
<feature type="binding site" evidence="1">
    <location>
        <begin position="253"/>
        <end position="254"/>
    </location>
    <ligand>
        <name>FMN</name>
        <dbReference type="ChEBI" id="CHEBI:58210"/>
    </ligand>
</feature>
<feature type="binding site" evidence="1">
    <location>
        <position position="298"/>
    </location>
    <ligand>
        <name>FMN</name>
        <dbReference type="ChEBI" id="CHEBI:58210"/>
    </ligand>
</feature>
<feature type="binding site" evidence="1">
    <location>
        <begin position="313"/>
        <end position="317"/>
    </location>
    <ligand>
        <name>FMN</name>
        <dbReference type="ChEBI" id="CHEBI:58210"/>
    </ligand>
</feature>
<feature type="binding site" evidence="1">
    <location>
        <position position="339"/>
    </location>
    <ligand>
        <name>FMN</name>
        <dbReference type="ChEBI" id="CHEBI:58210"/>
    </ligand>
</feature>
<organism>
    <name type="scientific">Bacillus cereus (strain ATCC 10987 / NRS 248)</name>
    <dbReference type="NCBI Taxonomy" id="222523"/>
    <lineage>
        <taxon>Bacteria</taxon>
        <taxon>Bacillati</taxon>
        <taxon>Bacillota</taxon>
        <taxon>Bacilli</taxon>
        <taxon>Bacillales</taxon>
        <taxon>Bacillaceae</taxon>
        <taxon>Bacillus</taxon>
        <taxon>Bacillus cereus group</taxon>
    </lineage>
</organism>